<organism>
    <name type="scientific">Rhodopseudomonas palustris (strain BisB5)</name>
    <dbReference type="NCBI Taxonomy" id="316057"/>
    <lineage>
        <taxon>Bacteria</taxon>
        <taxon>Pseudomonadati</taxon>
        <taxon>Pseudomonadota</taxon>
        <taxon>Alphaproteobacteria</taxon>
        <taxon>Hyphomicrobiales</taxon>
        <taxon>Nitrobacteraceae</taxon>
        <taxon>Rhodopseudomonas</taxon>
    </lineage>
</organism>
<evidence type="ECO:0000255" key="1">
    <source>
        <dbReference type="HAMAP-Rule" id="MF_00313"/>
    </source>
</evidence>
<sequence length="311" mass="33101">MSTDLLDRTVAEIAEEMAQRTDRGEVANYIPELARVDPQGFGLVVIDADGHVAAGGDADLPFSIQSISKVFTLTLALGKAGDRVWRRVGREPSGTAFNSIVQLERERGIPRNPFINAGAIAVTDLILSGHQPREALGEILRFMQFLAADSAITIDEAVAASEQRTGFRNAALANYMKSFGVLDNPVDYTLGVYFHHCAIAMSCRQLAMAGRFLAHNGRNPSTGHNVVSAQRARRINALMLTCGHYDGSGEFAYRVGLPGKSGVGGGVLAVAPGKASIAVWSPGLDASGNSHLGRIALEALTKRLGWSIFGV</sequence>
<feature type="chain" id="PRO_1000048351" description="Glutaminase">
    <location>
        <begin position="1"/>
        <end position="311"/>
    </location>
</feature>
<feature type="binding site" evidence="1">
    <location>
        <position position="66"/>
    </location>
    <ligand>
        <name>substrate</name>
    </ligand>
</feature>
<feature type="binding site" evidence="1">
    <location>
        <position position="116"/>
    </location>
    <ligand>
        <name>substrate</name>
    </ligand>
</feature>
<feature type="binding site" evidence="1">
    <location>
        <position position="162"/>
    </location>
    <ligand>
        <name>substrate</name>
    </ligand>
</feature>
<feature type="binding site" evidence="1">
    <location>
        <position position="169"/>
    </location>
    <ligand>
        <name>substrate</name>
    </ligand>
</feature>
<feature type="binding site" evidence="1">
    <location>
        <position position="193"/>
    </location>
    <ligand>
        <name>substrate</name>
    </ligand>
</feature>
<feature type="binding site" evidence="1">
    <location>
        <position position="245"/>
    </location>
    <ligand>
        <name>substrate</name>
    </ligand>
</feature>
<feature type="binding site" evidence="1">
    <location>
        <position position="263"/>
    </location>
    <ligand>
        <name>substrate</name>
    </ligand>
</feature>
<dbReference type="EC" id="3.5.1.2" evidence="1"/>
<dbReference type="EMBL" id="CP000283">
    <property type="protein sequence ID" value="ABE38621.1"/>
    <property type="molecule type" value="Genomic_DNA"/>
</dbReference>
<dbReference type="SMR" id="Q13BB8"/>
<dbReference type="STRING" id="316057.RPD_1383"/>
<dbReference type="KEGG" id="rpd:RPD_1383"/>
<dbReference type="eggNOG" id="COG2066">
    <property type="taxonomic scope" value="Bacteria"/>
</dbReference>
<dbReference type="HOGENOM" id="CLU_027932_1_1_5"/>
<dbReference type="BioCyc" id="RPAL316057:RPD_RS06990-MONOMER"/>
<dbReference type="Proteomes" id="UP000001818">
    <property type="component" value="Chromosome"/>
</dbReference>
<dbReference type="GO" id="GO:0004359">
    <property type="term" value="F:glutaminase activity"/>
    <property type="evidence" value="ECO:0007669"/>
    <property type="project" value="UniProtKB-UniRule"/>
</dbReference>
<dbReference type="GO" id="GO:0006537">
    <property type="term" value="P:glutamate biosynthetic process"/>
    <property type="evidence" value="ECO:0007669"/>
    <property type="project" value="TreeGrafter"/>
</dbReference>
<dbReference type="GO" id="GO:0006543">
    <property type="term" value="P:glutamine catabolic process"/>
    <property type="evidence" value="ECO:0007669"/>
    <property type="project" value="TreeGrafter"/>
</dbReference>
<dbReference type="FunFam" id="3.40.710.10:FF:000005">
    <property type="entry name" value="Glutaminase"/>
    <property type="match status" value="1"/>
</dbReference>
<dbReference type="Gene3D" id="3.40.710.10">
    <property type="entry name" value="DD-peptidase/beta-lactamase superfamily"/>
    <property type="match status" value="1"/>
</dbReference>
<dbReference type="HAMAP" id="MF_00313">
    <property type="entry name" value="Glutaminase"/>
    <property type="match status" value="1"/>
</dbReference>
<dbReference type="InterPro" id="IPR012338">
    <property type="entry name" value="Beta-lactam/transpept-like"/>
</dbReference>
<dbReference type="InterPro" id="IPR015868">
    <property type="entry name" value="Glutaminase"/>
</dbReference>
<dbReference type="NCBIfam" id="TIGR03814">
    <property type="entry name" value="Gln_ase"/>
    <property type="match status" value="1"/>
</dbReference>
<dbReference type="NCBIfam" id="NF002133">
    <property type="entry name" value="PRK00971.1-2"/>
    <property type="match status" value="1"/>
</dbReference>
<dbReference type="PANTHER" id="PTHR12544">
    <property type="entry name" value="GLUTAMINASE"/>
    <property type="match status" value="1"/>
</dbReference>
<dbReference type="PANTHER" id="PTHR12544:SF29">
    <property type="entry name" value="GLUTAMINASE"/>
    <property type="match status" value="1"/>
</dbReference>
<dbReference type="Pfam" id="PF04960">
    <property type="entry name" value="Glutaminase"/>
    <property type="match status" value="1"/>
</dbReference>
<dbReference type="SUPFAM" id="SSF56601">
    <property type="entry name" value="beta-lactamase/transpeptidase-like"/>
    <property type="match status" value="1"/>
</dbReference>
<reference key="1">
    <citation type="submission" date="2006-03" db="EMBL/GenBank/DDBJ databases">
        <title>Complete sequence of Rhodopseudomonas palustris BisB5.</title>
        <authorList>
            <consortium name="US DOE Joint Genome Institute"/>
            <person name="Copeland A."/>
            <person name="Lucas S."/>
            <person name="Lapidus A."/>
            <person name="Barry K."/>
            <person name="Detter J.C."/>
            <person name="Glavina del Rio T."/>
            <person name="Hammon N."/>
            <person name="Israni S."/>
            <person name="Dalin E."/>
            <person name="Tice H."/>
            <person name="Pitluck S."/>
            <person name="Chain P."/>
            <person name="Malfatti S."/>
            <person name="Shin M."/>
            <person name="Vergez L."/>
            <person name="Schmutz J."/>
            <person name="Larimer F."/>
            <person name="Land M."/>
            <person name="Hauser L."/>
            <person name="Pelletier D.A."/>
            <person name="Kyrpides N."/>
            <person name="Lykidis A."/>
            <person name="Oda Y."/>
            <person name="Harwood C.S."/>
            <person name="Richardson P."/>
        </authorList>
    </citation>
    <scope>NUCLEOTIDE SEQUENCE [LARGE SCALE GENOMIC DNA]</scope>
    <source>
        <strain>BisB5</strain>
    </source>
</reference>
<proteinExistence type="inferred from homology"/>
<accession>Q13BB8</accession>
<name>GLSA_RHOPS</name>
<protein>
    <recommendedName>
        <fullName evidence="1">Glutaminase</fullName>
        <ecNumber evidence="1">3.5.1.2</ecNumber>
    </recommendedName>
</protein>
<gene>
    <name evidence="1" type="primary">glsA</name>
    <name type="ordered locus">RPD_1383</name>
</gene>
<comment type="catalytic activity">
    <reaction evidence="1">
        <text>L-glutamine + H2O = L-glutamate + NH4(+)</text>
        <dbReference type="Rhea" id="RHEA:15889"/>
        <dbReference type="ChEBI" id="CHEBI:15377"/>
        <dbReference type="ChEBI" id="CHEBI:28938"/>
        <dbReference type="ChEBI" id="CHEBI:29985"/>
        <dbReference type="ChEBI" id="CHEBI:58359"/>
        <dbReference type="EC" id="3.5.1.2"/>
    </reaction>
</comment>
<comment type="subunit">
    <text evidence="1">Homotetramer.</text>
</comment>
<comment type="similarity">
    <text evidence="1">Belongs to the glutaminase family.</text>
</comment>
<keyword id="KW-0378">Hydrolase</keyword>